<evidence type="ECO:0000250" key="1">
    <source>
        <dbReference type="UniProtKB" id="Q16602"/>
    </source>
</evidence>
<evidence type="ECO:0000255" key="2"/>
<evidence type="ECO:0000269" key="3">
    <source>
    </source>
</evidence>
<evidence type="ECO:0000305" key="4"/>
<feature type="signal peptide" evidence="2">
    <location>
        <begin position="1"/>
        <end position="17"/>
    </location>
</feature>
<feature type="chain" id="PRO_0000373834" description="Calcitonin gene-related peptide type 1 receptor">
    <location>
        <begin position="18"/>
        <end position="465"/>
    </location>
</feature>
<feature type="topological domain" description="Extracellular" evidence="4">
    <location>
        <begin position="18"/>
        <end position="141"/>
    </location>
</feature>
<feature type="transmembrane region" description="Helical; Name=1" evidence="1">
    <location>
        <begin position="142"/>
        <end position="166"/>
    </location>
</feature>
<feature type="topological domain" description="Cytoplasmic" evidence="4">
    <location>
        <begin position="167"/>
        <end position="177"/>
    </location>
</feature>
<feature type="transmembrane region" description="Helical; Name=2" evidence="1">
    <location>
        <begin position="178"/>
        <end position="200"/>
    </location>
</feature>
<feature type="topological domain" description="Extracellular" evidence="4">
    <location>
        <begin position="201"/>
        <end position="211"/>
    </location>
</feature>
<feature type="transmembrane region" description="Helical; Name=3" evidence="1">
    <location>
        <begin position="212"/>
        <end position="240"/>
    </location>
</feature>
<feature type="topological domain" description="Cytoplasmic" evidence="4">
    <location>
        <begin position="241"/>
        <end position="254"/>
    </location>
</feature>
<feature type="transmembrane region" description="Helical; Name=4" evidence="1">
    <location>
        <begin position="255"/>
        <end position="275"/>
    </location>
</feature>
<feature type="topological domain" description="Extracellular" evidence="4">
    <location>
        <begin position="276"/>
        <end position="291"/>
    </location>
</feature>
<feature type="transmembrane region" description="Helical; Name=5" evidence="1">
    <location>
        <begin position="292"/>
        <end position="316"/>
    </location>
</feature>
<feature type="topological domain" description="Cytoplasmic" evidence="4">
    <location>
        <begin position="317"/>
        <end position="331"/>
    </location>
</feature>
<feature type="transmembrane region" description="Helical; Name=6" evidence="1">
    <location>
        <begin position="332"/>
        <end position="353"/>
    </location>
</feature>
<feature type="topological domain" description="Extracellular" evidence="4">
    <location>
        <begin position="354"/>
        <end position="368"/>
    </location>
</feature>
<feature type="transmembrane region" description="Helical; Name=7" evidence="1">
    <location>
        <begin position="369"/>
        <end position="389"/>
    </location>
</feature>
<feature type="topological domain" description="Cytoplasmic" evidence="4">
    <location>
        <begin position="390"/>
        <end position="465"/>
    </location>
</feature>
<feature type="glycosylation site" description="N-linked (GlcNAc...) asparagine" evidence="2">
    <location>
        <position position="22"/>
    </location>
</feature>
<feature type="glycosylation site" description="N-linked (GlcNAc...) asparagine" evidence="2">
    <location>
        <position position="68"/>
    </location>
</feature>
<feature type="glycosylation site" description="N-linked (GlcNAc...) asparagine" evidence="2">
    <location>
        <position position="120"/>
    </location>
</feature>
<feature type="glycosylation site" description="N-linked (GlcNAc...) asparagine" evidence="2">
    <location>
        <position position="125"/>
    </location>
</feature>
<feature type="glycosylation site" description="N-linked (GlcNAc...) asparagine" evidence="2">
    <location>
        <position position="289"/>
    </location>
</feature>
<feature type="disulfide bond" evidence="1">
    <location>
        <begin position="50"/>
        <end position="76"/>
    </location>
</feature>
<feature type="disulfide bond" evidence="1">
    <location>
        <begin position="67"/>
        <end position="107"/>
    </location>
</feature>
<feature type="disulfide bond" evidence="1">
    <location>
        <begin position="90"/>
        <end position="129"/>
    </location>
</feature>
<protein>
    <recommendedName>
        <fullName>Calcitonin gene-related peptide type 1 receptor</fullName>
        <shortName>CGRP type 1 receptor</shortName>
    </recommendedName>
    <alternativeName>
        <fullName>Calcitonin receptor-like receptor</fullName>
    </alternativeName>
</protein>
<sequence>MVICLLLCTPTDIFVVASPEVNETQEYVPVNVYHDTDVTRKKIVTAQFECYQKIMKDNDHNKIGPVCNRTWDGWLCWDDTEAGFTSEQYCPDYFQDFDPSELVTKICSDNGHWFLHPESNRTWTNYTRCNEHTNEGRMTAMNLFYLALIGHGLSLTSLLISLGIFFYFKSLSCQRITLHKNLFFSFVLNSVITIIWLTAVANNQELVQRNPTSCKVSQFIHLYLFGCNYFWMLCEGIYLHTLIVVAVFAEKQHLMWYYLLGWGFPLIPASIHAIARSYYYNDNCWISSNTSLLYIIHGPICAALLVNLFFLLNIVRVLITKLKVTHQAESSLYMKAVRATLILVPLLGIQYVLLPYKPEGRVSSEIYDYIMHILMHYQGLLVATIFCFFNGEVQGVLRRHWNQYRIQFGSTFAHSDAMRSASYTASSITEVQGCYSIDSHTEHLNGKGAPLDIETSILKSENPFT</sequence>
<keyword id="KW-1003">Cell membrane</keyword>
<keyword id="KW-1015">Disulfide bond</keyword>
<keyword id="KW-0297">G-protein coupled receptor</keyword>
<keyword id="KW-0325">Glycoprotein</keyword>
<keyword id="KW-0472">Membrane</keyword>
<keyword id="KW-0675">Receptor</keyword>
<keyword id="KW-0732">Signal</keyword>
<keyword id="KW-0807">Transducer</keyword>
<keyword id="KW-0812">Transmembrane</keyword>
<keyword id="KW-1133">Transmembrane helix</keyword>
<comment type="function">
    <text evidence="3">May function as G protein-coupled receptor for calcitonin-gene-related peptides and adrenomedullin (PubMed:12426108). Specificity may be modulated by accessory proteins (PubMed:12426108). May activate cAMP-dependent pathway (PubMed:12426108).</text>
</comment>
<comment type="subcellular location">
    <subcellularLocation>
        <location evidence="1">Cell membrane</location>
        <topology evidence="1">Multi-pass membrane protein</topology>
    </subcellularLocation>
</comment>
<comment type="similarity">
    <text evidence="4">Belongs to the G-protein coupled receptor 2 family.</text>
</comment>
<gene>
    <name type="primary">calcrl</name>
</gene>
<dbReference type="EMBL" id="AJ508554">
    <property type="protein sequence ID" value="CAD48406.1"/>
    <property type="molecule type" value="mRNA"/>
</dbReference>
<dbReference type="SMR" id="Q8AXU4"/>
<dbReference type="GlyCosmos" id="Q8AXU4">
    <property type="glycosylation" value="5 sites, No reported glycans"/>
</dbReference>
<dbReference type="GO" id="GO:0005886">
    <property type="term" value="C:plasma membrane"/>
    <property type="evidence" value="ECO:0007669"/>
    <property type="project" value="UniProtKB-SubCell"/>
</dbReference>
<dbReference type="GO" id="GO:0001605">
    <property type="term" value="F:adrenomedullin receptor activity"/>
    <property type="evidence" value="ECO:0007669"/>
    <property type="project" value="TreeGrafter"/>
</dbReference>
<dbReference type="GO" id="GO:0001635">
    <property type="term" value="F:calcitonin gene-related peptide receptor activity"/>
    <property type="evidence" value="ECO:0007669"/>
    <property type="project" value="TreeGrafter"/>
</dbReference>
<dbReference type="GO" id="GO:0004948">
    <property type="term" value="F:calcitonin receptor activity"/>
    <property type="evidence" value="ECO:0007669"/>
    <property type="project" value="InterPro"/>
</dbReference>
<dbReference type="GO" id="GO:0007189">
    <property type="term" value="P:adenylate cyclase-activating G protein-coupled receptor signaling pathway"/>
    <property type="evidence" value="ECO:0007669"/>
    <property type="project" value="TreeGrafter"/>
</dbReference>
<dbReference type="GO" id="GO:0001525">
    <property type="term" value="P:angiogenesis"/>
    <property type="evidence" value="ECO:0007669"/>
    <property type="project" value="TreeGrafter"/>
</dbReference>
<dbReference type="GO" id="GO:0007166">
    <property type="term" value="P:cell surface receptor signaling pathway"/>
    <property type="evidence" value="ECO:0007669"/>
    <property type="project" value="InterPro"/>
</dbReference>
<dbReference type="CDD" id="cd15274">
    <property type="entry name" value="7tmB1_calcitonin_R"/>
    <property type="match status" value="1"/>
</dbReference>
<dbReference type="FunFam" id="1.20.1070.10:FF:000079">
    <property type="entry name" value="Calcitonin gene-related peptide type 1 receptor"/>
    <property type="match status" value="1"/>
</dbReference>
<dbReference type="FunFam" id="4.10.1240.10:FF:000011">
    <property type="entry name" value="Calcitonin gene-related peptide type 1 receptor"/>
    <property type="match status" value="1"/>
</dbReference>
<dbReference type="Gene3D" id="4.10.1240.10">
    <property type="entry name" value="GPCR, family 2, extracellular hormone receptor domain"/>
    <property type="match status" value="1"/>
</dbReference>
<dbReference type="Gene3D" id="1.20.1070.10">
    <property type="entry name" value="Rhodopsin 7-helix transmembrane proteins"/>
    <property type="match status" value="1"/>
</dbReference>
<dbReference type="InterPro" id="IPR050332">
    <property type="entry name" value="GPCR_2"/>
</dbReference>
<dbReference type="InterPro" id="IPR017981">
    <property type="entry name" value="GPCR_2-like_7TM"/>
</dbReference>
<dbReference type="InterPro" id="IPR003287">
    <property type="entry name" value="GPCR_2_calcitonin_rcpt_fam"/>
</dbReference>
<dbReference type="InterPro" id="IPR003289">
    <property type="entry name" value="GPCR_2_CGRP1_rcpt"/>
</dbReference>
<dbReference type="InterPro" id="IPR036445">
    <property type="entry name" value="GPCR_2_extracell_dom_sf"/>
</dbReference>
<dbReference type="InterPro" id="IPR001879">
    <property type="entry name" value="GPCR_2_extracellular_dom"/>
</dbReference>
<dbReference type="InterPro" id="IPR000832">
    <property type="entry name" value="GPCR_2_secretin-like"/>
</dbReference>
<dbReference type="InterPro" id="IPR017983">
    <property type="entry name" value="GPCR_2_secretin-like_CS"/>
</dbReference>
<dbReference type="PANTHER" id="PTHR45620:SF21">
    <property type="entry name" value="CALCITONIN GENE-RELATED PEPTIDE TYPE 1 RECEPTOR"/>
    <property type="match status" value="1"/>
</dbReference>
<dbReference type="PANTHER" id="PTHR45620">
    <property type="entry name" value="PDF RECEPTOR-LIKE PROTEIN-RELATED"/>
    <property type="match status" value="1"/>
</dbReference>
<dbReference type="Pfam" id="PF00002">
    <property type="entry name" value="7tm_2"/>
    <property type="match status" value="1"/>
</dbReference>
<dbReference type="Pfam" id="PF02793">
    <property type="entry name" value="HRM"/>
    <property type="match status" value="1"/>
</dbReference>
<dbReference type="PRINTS" id="PR01351">
    <property type="entry name" value="CGRPRECEPTOR"/>
</dbReference>
<dbReference type="PRINTS" id="PR01350">
    <property type="entry name" value="CTRFAMILY"/>
</dbReference>
<dbReference type="PRINTS" id="PR00249">
    <property type="entry name" value="GPCRSECRETIN"/>
</dbReference>
<dbReference type="SMART" id="SM00008">
    <property type="entry name" value="HormR"/>
    <property type="match status" value="1"/>
</dbReference>
<dbReference type="SUPFAM" id="SSF81321">
    <property type="entry name" value="Family A G protein-coupled receptor-like"/>
    <property type="match status" value="1"/>
</dbReference>
<dbReference type="SUPFAM" id="SSF111418">
    <property type="entry name" value="Hormone receptor domain"/>
    <property type="match status" value="1"/>
</dbReference>
<dbReference type="PROSITE" id="PS00649">
    <property type="entry name" value="G_PROTEIN_RECEP_F2_1"/>
    <property type="match status" value="1"/>
</dbReference>
<dbReference type="PROSITE" id="PS00650">
    <property type="entry name" value="G_PROTEIN_RECEP_F2_2"/>
    <property type="match status" value="1"/>
</dbReference>
<dbReference type="PROSITE" id="PS50227">
    <property type="entry name" value="G_PROTEIN_RECEP_F2_3"/>
    <property type="match status" value="1"/>
</dbReference>
<dbReference type="PROSITE" id="PS50261">
    <property type="entry name" value="G_PROTEIN_RECEP_F2_4"/>
    <property type="match status" value="1"/>
</dbReference>
<reference key="1">
    <citation type="journal article" date="2002" name="Gene">
        <title>Sequencing of a calcitonin receptor-like receptor in salmon Oncorhynchus gorbuscha. Functional studies using the human receptor activity-modifying proteins.</title>
        <authorList>
            <person name="Pidoux E."/>
            <person name="Cressent M."/>
        </authorList>
    </citation>
    <scope>NUCLEOTIDE SEQUENCE [MRNA]</scope>
    <scope>FUNCTION</scope>
    <source>
        <tissue>Brain</tissue>
    </source>
</reference>
<accession>Q8AXU4</accession>
<organism>
    <name type="scientific">Oncorhynchus gorbuscha</name>
    <name type="common">Pink salmon</name>
    <name type="synonym">Salmo gorbuscha</name>
    <dbReference type="NCBI Taxonomy" id="8017"/>
    <lineage>
        <taxon>Eukaryota</taxon>
        <taxon>Metazoa</taxon>
        <taxon>Chordata</taxon>
        <taxon>Craniata</taxon>
        <taxon>Vertebrata</taxon>
        <taxon>Euteleostomi</taxon>
        <taxon>Actinopterygii</taxon>
        <taxon>Neopterygii</taxon>
        <taxon>Teleostei</taxon>
        <taxon>Protacanthopterygii</taxon>
        <taxon>Salmoniformes</taxon>
        <taxon>Salmonidae</taxon>
        <taxon>Salmoninae</taxon>
        <taxon>Oncorhynchus</taxon>
    </lineage>
</organism>
<name>CALRL_ONCGO</name>
<proteinExistence type="evidence at transcript level"/>